<feature type="chain" id="PRO_0000270859" description="Type III pantothenate kinase">
    <location>
        <begin position="1"/>
        <end position="229"/>
    </location>
</feature>
<feature type="active site" description="Proton acceptor" evidence="1">
    <location>
        <position position="87"/>
    </location>
</feature>
<feature type="binding site" evidence="1">
    <location>
        <begin position="7"/>
        <end position="14"/>
    </location>
    <ligand>
        <name>ATP</name>
        <dbReference type="ChEBI" id="CHEBI:30616"/>
    </ligand>
</feature>
<feature type="binding site" evidence="1">
    <location>
        <position position="78"/>
    </location>
    <ligand>
        <name>substrate</name>
    </ligand>
</feature>
<feature type="binding site" evidence="1">
    <location>
        <begin position="85"/>
        <end position="88"/>
    </location>
    <ligand>
        <name>substrate</name>
    </ligand>
</feature>
<feature type="binding site" evidence="1">
    <location>
        <position position="110"/>
    </location>
    <ligand>
        <name>ATP</name>
        <dbReference type="ChEBI" id="CHEBI:30616"/>
    </ligand>
</feature>
<feature type="binding site" evidence="1">
    <location>
        <position position="161"/>
    </location>
    <ligand>
        <name>substrate</name>
    </ligand>
</feature>
<reference key="1">
    <citation type="journal article" date="1998" name="Nature">
        <title>The complete genome of the hyperthermophilic bacterium Aquifex aeolicus.</title>
        <authorList>
            <person name="Deckert G."/>
            <person name="Warren P.V."/>
            <person name="Gaasterland T."/>
            <person name="Young W.G."/>
            <person name="Lenox A.L."/>
            <person name="Graham D.E."/>
            <person name="Overbeek R."/>
            <person name="Snead M.A."/>
            <person name="Keller M."/>
            <person name="Aujay M."/>
            <person name="Huber R."/>
            <person name="Feldman R.A."/>
            <person name="Short J.M."/>
            <person name="Olsen G.J."/>
            <person name="Swanson R.V."/>
        </authorList>
    </citation>
    <scope>NUCLEOTIDE SEQUENCE [LARGE SCALE GENOMIC DNA]</scope>
    <source>
        <strain>VF5</strain>
    </source>
</reference>
<evidence type="ECO:0000255" key="1">
    <source>
        <dbReference type="HAMAP-Rule" id="MF_01274"/>
    </source>
</evidence>
<sequence length="229" mass="26068">MRFLTVDVGNSSVDIALWEGKKVKDFLKLSHEEFLKEEFPKLKALGISVKQSFSEKVRGKIPKIKFLKKENFPIQVDYKTPETLGTDRVALAYSAKKFYGKNVVVISAGTALVIDLVLEGKFKGGFITLGLGKKLKILSDLAEGIPEFFPEEVEIFLGRSTRECVLGGAYRESTEFIKSTLKLWRKVFKRKFKVVITGGEGKYFSKFGIYDPLLVHRGMRNLLYLYHRI</sequence>
<proteinExistence type="inferred from homology"/>
<comment type="function">
    <text evidence="1">Catalyzes the phosphorylation of pantothenate (Pan), the first step in CoA biosynthesis.</text>
</comment>
<comment type="catalytic activity">
    <reaction evidence="1">
        <text>(R)-pantothenate + ATP = (R)-4'-phosphopantothenate + ADP + H(+)</text>
        <dbReference type="Rhea" id="RHEA:16373"/>
        <dbReference type="ChEBI" id="CHEBI:10986"/>
        <dbReference type="ChEBI" id="CHEBI:15378"/>
        <dbReference type="ChEBI" id="CHEBI:29032"/>
        <dbReference type="ChEBI" id="CHEBI:30616"/>
        <dbReference type="ChEBI" id="CHEBI:456216"/>
        <dbReference type="EC" id="2.7.1.33"/>
    </reaction>
</comment>
<comment type="cofactor">
    <cofactor evidence="1">
        <name>NH4(+)</name>
        <dbReference type="ChEBI" id="CHEBI:28938"/>
    </cofactor>
    <cofactor evidence="1">
        <name>K(+)</name>
        <dbReference type="ChEBI" id="CHEBI:29103"/>
    </cofactor>
    <text evidence="1">A monovalent cation. Ammonium or potassium.</text>
</comment>
<comment type="pathway">
    <text evidence="1">Cofactor biosynthesis; coenzyme A biosynthesis; CoA from (R)-pantothenate: step 1/5.</text>
</comment>
<comment type="subunit">
    <text evidence="1">Homodimer.</text>
</comment>
<comment type="subcellular location">
    <subcellularLocation>
        <location evidence="1">Cytoplasm</location>
    </subcellularLocation>
</comment>
<comment type="similarity">
    <text evidence="1">Belongs to the type III pantothenate kinase family.</text>
</comment>
<protein>
    <recommendedName>
        <fullName evidence="1">Type III pantothenate kinase</fullName>
        <ecNumber evidence="1">2.7.1.33</ecNumber>
    </recommendedName>
    <alternativeName>
        <fullName evidence="1">PanK-III</fullName>
    </alternativeName>
    <alternativeName>
        <fullName evidence="1">Pantothenic acid kinase</fullName>
    </alternativeName>
</protein>
<name>COAX_AQUAE</name>
<accession>O67753</accession>
<dbReference type="EC" id="2.7.1.33" evidence="1"/>
<dbReference type="EMBL" id="AE000657">
    <property type="protein sequence ID" value="AAC07720.1"/>
    <property type="molecule type" value="Genomic_DNA"/>
</dbReference>
<dbReference type="PIR" id="E70465">
    <property type="entry name" value="E70465"/>
</dbReference>
<dbReference type="RefSeq" id="NP_214321.1">
    <property type="nucleotide sequence ID" value="NC_000918.1"/>
</dbReference>
<dbReference type="RefSeq" id="WP_010881257.1">
    <property type="nucleotide sequence ID" value="NC_000918.1"/>
</dbReference>
<dbReference type="SMR" id="O67753"/>
<dbReference type="STRING" id="224324.aq_1924"/>
<dbReference type="EnsemblBacteria" id="AAC07720">
    <property type="protein sequence ID" value="AAC07720"/>
    <property type="gene ID" value="aq_1924"/>
</dbReference>
<dbReference type="KEGG" id="aae:aq_1924"/>
<dbReference type="eggNOG" id="COG1521">
    <property type="taxonomic scope" value="Bacteria"/>
</dbReference>
<dbReference type="HOGENOM" id="CLU_104130_0_0_0"/>
<dbReference type="InParanoid" id="O67753"/>
<dbReference type="OrthoDB" id="14683at2"/>
<dbReference type="UniPathway" id="UPA00241">
    <property type="reaction ID" value="UER00352"/>
</dbReference>
<dbReference type="Proteomes" id="UP000000798">
    <property type="component" value="Chromosome"/>
</dbReference>
<dbReference type="GO" id="GO:0005737">
    <property type="term" value="C:cytoplasm"/>
    <property type="evidence" value="ECO:0007669"/>
    <property type="project" value="UniProtKB-SubCell"/>
</dbReference>
<dbReference type="GO" id="GO:0005524">
    <property type="term" value="F:ATP binding"/>
    <property type="evidence" value="ECO:0007669"/>
    <property type="project" value="UniProtKB-UniRule"/>
</dbReference>
<dbReference type="GO" id="GO:0004594">
    <property type="term" value="F:pantothenate kinase activity"/>
    <property type="evidence" value="ECO:0007669"/>
    <property type="project" value="UniProtKB-UniRule"/>
</dbReference>
<dbReference type="GO" id="GO:0015937">
    <property type="term" value="P:coenzyme A biosynthetic process"/>
    <property type="evidence" value="ECO:0007669"/>
    <property type="project" value="UniProtKB-UniRule"/>
</dbReference>
<dbReference type="CDD" id="cd24015">
    <property type="entry name" value="ASKHA_NBD_PanK-III"/>
    <property type="match status" value="1"/>
</dbReference>
<dbReference type="Gene3D" id="3.30.420.40">
    <property type="match status" value="1"/>
</dbReference>
<dbReference type="HAMAP" id="MF_01274">
    <property type="entry name" value="Pantothen_kinase_3"/>
    <property type="match status" value="1"/>
</dbReference>
<dbReference type="InterPro" id="IPR043129">
    <property type="entry name" value="ATPase_NBD"/>
</dbReference>
<dbReference type="InterPro" id="IPR004619">
    <property type="entry name" value="Type_III_PanK"/>
</dbReference>
<dbReference type="NCBIfam" id="TIGR00671">
    <property type="entry name" value="baf"/>
    <property type="match status" value="1"/>
</dbReference>
<dbReference type="PANTHER" id="PTHR34265">
    <property type="entry name" value="TYPE III PANTOTHENATE KINASE"/>
    <property type="match status" value="1"/>
</dbReference>
<dbReference type="PANTHER" id="PTHR34265:SF1">
    <property type="entry name" value="TYPE III PANTOTHENATE KINASE"/>
    <property type="match status" value="1"/>
</dbReference>
<dbReference type="Pfam" id="PF03309">
    <property type="entry name" value="Pan_kinase"/>
    <property type="match status" value="1"/>
</dbReference>
<dbReference type="SUPFAM" id="SSF53067">
    <property type="entry name" value="Actin-like ATPase domain"/>
    <property type="match status" value="2"/>
</dbReference>
<gene>
    <name evidence="1" type="primary">coaX</name>
    <name type="ordered locus">aq_1924</name>
</gene>
<keyword id="KW-0067">ATP-binding</keyword>
<keyword id="KW-0173">Coenzyme A biosynthesis</keyword>
<keyword id="KW-0963">Cytoplasm</keyword>
<keyword id="KW-0418">Kinase</keyword>
<keyword id="KW-0547">Nucleotide-binding</keyword>
<keyword id="KW-0630">Potassium</keyword>
<keyword id="KW-1185">Reference proteome</keyword>
<keyword id="KW-0808">Transferase</keyword>
<organism>
    <name type="scientific">Aquifex aeolicus (strain VF5)</name>
    <dbReference type="NCBI Taxonomy" id="224324"/>
    <lineage>
        <taxon>Bacteria</taxon>
        <taxon>Pseudomonadati</taxon>
        <taxon>Aquificota</taxon>
        <taxon>Aquificia</taxon>
        <taxon>Aquificales</taxon>
        <taxon>Aquificaceae</taxon>
        <taxon>Aquifex</taxon>
    </lineage>
</organism>